<organism>
    <name type="scientific">Saccharomyces cerevisiae (strain ATCC 204508 / S288c)</name>
    <name type="common">Baker's yeast</name>
    <dbReference type="NCBI Taxonomy" id="559292"/>
    <lineage>
        <taxon>Eukaryota</taxon>
        <taxon>Fungi</taxon>
        <taxon>Dikarya</taxon>
        <taxon>Ascomycota</taxon>
        <taxon>Saccharomycotina</taxon>
        <taxon>Saccharomycetes</taxon>
        <taxon>Saccharomycetales</taxon>
        <taxon>Saccharomycetaceae</taxon>
        <taxon>Saccharomyces</taxon>
    </lineage>
</organism>
<accession>P19736</accession>
<accession>D6VRW2</accession>
<protein>
    <recommendedName>
        <fullName>Pre-mRNA-splicing factor PRP9</fullName>
    </recommendedName>
</protein>
<keyword id="KW-0002">3D-structure</keyword>
<keyword id="KW-0479">Metal-binding</keyword>
<keyword id="KW-0507">mRNA processing</keyword>
<keyword id="KW-0508">mRNA splicing</keyword>
<keyword id="KW-0539">Nucleus</keyword>
<keyword id="KW-1185">Reference proteome</keyword>
<keyword id="KW-0677">Repeat</keyword>
<keyword id="KW-0747">Spliceosome</keyword>
<keyword id="KW-0862">Zinc</keyword>
<keyword id="KW-0863">Zinc-finger</keyword>
<feature type="chain" id="PRO_0000174321" description="Pre-mRNA-splicing factor PRP9">
    <location>
        <begin position="1"/>
        <end position="530"/>
    </location>
</feature>
<feature type="zinc finger region" description="Matrin-type 1" evidence="1">
    <location>
        <begin position="280"/>
        <end position="310"/>
    </location>
</feature>
<feature type="zinc finger region" description="Matrin-type 2" evidence="1">
    <location>
        <begin position="421"/>
        <end position="452"/>
    </location>
</feature>
<feature type="region of interest" description="Disordered" evidence="2">
    <location>
        <begin position="367"/>
        <end position="388"/>
    </location>
</feature>
<feature type="region of interest" description="Disordered" evidence="2">
    <location>
        <begin position="488"/>
        <end position="516"/>
    </location>
</feature>
<feature type="compositionally biased region" description="Basic and acidic residues" evidence="2">
    <location>
        <begin position="368"/>
        <end position="388"/>
    </location>
</feature>
<feature type="compositionally biased region" description="Acidic residues" evidence="2">
    <location>
        <begin position="504"/>
        <end position="513"/>
    </location>
</feature>
<feature type="helix" evidence="6">
    <location>
        <begin position="3"/>
        <end position="27"/>
    </location>
</feature>
<feature type="helix" evidence="6">
    <location>
        <begin position="30"/>
        <end position="40"/>
    </location>
</feature>
<feature type="helix" evidence="6">
    <location>
        <begin position="51"/>
        <end position="56"/>
    </location>
</feature>
<feature type="strand" evidence="6">
    <location>
        <begin position="58"/>
        <end position="61"/>
    </location>
</feature>
<feature type="helix" evidence="6">
    <location>
        <begin position="69"/>
        <end position="96"/>
    </location>
</feature>
<feature type="helix" evidence="6">
    <location>
        <begin position="113"/>
        <end position="122"/>
    </location>
</feature>
<feature type="helix" evidence="6">
    <location>
        <begin position="137"/>
        <end position="143"/>
    </location>
</feature>
<feature type="strand" evidence="6">
    <location>
        <begin position="149"/>
        <end position="154"/>
    </location>
</feature>
<feature type="helix" evidence="6">
    <location>
        <begin position="159"/>
        <end position="161"/>
    </location>
</feature>
<feature type="helix" evidence="6">
    <location>
        <begin position="166"/>
        <end position="168"/>
    </location>
</feature>
<feature type="turn" evidence="6">
    <location>
        <begin position="172"/>
        <end position="178"/>
    </location>
</feature>
<feature type="helix" evidence="6">
    <location>
        <begin position="183"/>
        <end position="193"/>
    </location>
</feature>
<feature type="helix" evidence="6">
    <location>
        <begin position="200"/>
        <end position="208"/>
    </location>
</feature>
<feature type="helix" evidence="6">
    <location>
        <begin position="209"/>
        <end position="211"/>
    </location>
</feature>
<feature type="strand" evidence="6">
    <location>
        <begin position="212"/>
        <end position="214"/>
    </location>
</feature>
<feature type="helix" evidence="6">
    <location>
        <begin position="215"/>
        <end position="218"/>
    </location>
</feature>
<feature type="helix" evidence="6">
    <location>
        <begin position="227"/>
        <end position="247"/>
    </location>
</feature>
<feature type="helix" evidence="6">
    <location>
        <begin position="253"/>
        <end position="266"/>
    </location>
</feature>
<feature type="helix" evidence="6">
    <location>
        <begin position="268"/>
        <end position="270"/>
    </location>
</feature>
<feature type="turn" evidence="6">
    <location>
        <begin position="276"/>
        <end position="278"/>
    </location>
</feature>
<feature type="turn" evidence="6">
    <location>
        <begin position="283"/>
        <end position="286"/>
    </location>
</feature>
<feature type="strand" evidence="6">
    <location>
        <begin position="289"/>
        <end position="291"/>
    </location>
</feature>
<feature type="helix" evidence="6">
    <location>
        <begin position="292"/>
        <end position="296"/>
    </location>
</feature>
<feature type="strand" evidence="6">
    <location>
        <begin position="299"/>
        <end position="301"/>
    </location>
</feature>
<feature type="helix" evidence="6">
    <location>
        <begin position="302"/>
        <end position="310"/>
    </location>
</feature>
<feature type="helix" evidence="6">
    <location>
        <begin position="312"/>
        <end position="327"/>
    </location>
</feature>
<feature type="helix" evidence="6">
    <location>
        <begin position="329"/>
        <end position="343"/>
    </location>
</feature>
<feature type="helix" evidence="6">
    <location>
        <begin position="347"/>
        <end position="361"/>
    </location>
</feature>
<comment type="function">
    <text>mRNA splicing factors, PRP9, PRP11, and PRP21, are necessary for binding of the U2 snRNP to the pre-mRNA in an early step of spliceosome assembly.</text>
</comment>
<comment type="subunit">
    <text evidence="3">Belongs to the CWC complex (or CEF1-associated complex), a spliceosome sub-complex reminiscent of a late-stage spliceosome composed of the U2, U5 and U6 snRNAs and at least BUD13, BUD31, BRR2, CDC40, CEF1, CLF1, CUS1, CWC2, CWC15, CWC21, CWC22, CWC23, CWC24, CWC25, CWC27, ECM2, HSH155, IST3, ISY1, LEA1, MSL1, NTC20, PRP8, PRP9, PRP11, PRP19, PRP21, PRP22, PRP45, PRP46, SLU7, SMB1, SMD1, SMD2, SMD3, SMX2, SMX3, SNT309, SNU114, SPP2, SYF1, SYF2, RSE1 and YJU2.</text>
</comment>
<comment type="subcellular location">
    <subcellularLocation>
        <location>Nucleus</location>
    </subcellularLocation>
</comment>
<comment type="miscellaneous">
    <text evidence="4">Present with 3920 molecules/cell in log phase SD medium.</text>
</comment>
<comment type="similarity">
    <text evidence="5">Belongs to the SF3A3 family.</text>
</comment>
<evidence type="ECO:0000255" key="1">
    <source>
        <dbReference type="PROSITE-ProRule" id="PRU00130"/>
    </source>
</evidence>
<evidence type="ECO:0000256" key="2">
    <source>
        <dbReference type="SAM" id="MobiDB-lite"/>
    </source>
</evidence>
<evidence type="ECO:0000269" key="3">
    <source>
    </source>
</evidence>
<evidence type="ECO:0000269" key="4">
    <source>
    </source>
</evidence>
<evidence type="ECO:0000305" key="5"/>
<evidence type="ECO:0007829" key="6">
    <source>
        <dbReference type="PDB" id="4DGW"/>
    </source>
</evidence>
<name>PRP9_YEAST</name>
<reference key="1">
    <citation type="journal article" date="1990" name="EMBO J.">
        <title>The molecular characterization of PRP6 and PRP9 yeast genes reveals a new cysteine/histidine motif common to several splicing factors.</title>
        <authorList>
            <person name="Legrain P."/>
            <person name="Choulika A."/>
        </authorList>
    </citation>
    <scope>NUCLEOTIDE SEQUENCE [GENOMIC DNA]</scope>
    <source>
        <strain>S288c / GRF88</strain>
    </source>
</reference>
<reference key="2">
    <citation type="journal article" date="1997" name="Nature">
        <title>The nucleotide sequence of Saccharomyces cerevisiae chromosome IV.</title>
        <authorList>
            <person name="Jacq C."/>
            <person name="Alt-Moerbe J."/>
            <person name="Andre B."/>
            <person name="Arnold W."/>
            <person name="Bahr A."/>
            <person name="Ballesta J.P.G."/>
            <person name="Bargues M."/>
            <person name="Baron L."/>
            <person name="Becker A."/>
            <person name="Biteau N."/>
            <person name="Bloecker H."/>
            <person name="Blugeon C."/>
            <person name="Boskovic J."/>
            <person name="Brandt P."/>
            <person name="Brueckner M."/>
            <person name="Buitrago M.J."/>
            <person name="Coster F."/>
            <person name="Delaveau T."/>
            <person name="del Rey F."/>
            <person name="Dujon B."/>
            <person name="Eide L.G."/>
            <person name="Garcia-Cantalejo J.M."/>
            <person name="Goffeau A."/>
            <person name="Gomez-Peris A."/>
            <person name="Granotier C."/>
            <person name="Hanemann V."/>
            <person name="Hankeln T."/>
            <person name="Hoheisel J.D."/>
            <person name="Jaeger W."/>
            <person name="Jimenez A."/>
            <person name="Jonniaux J.-L."/>
            <person name="Kraemer C."/>
            <person name="Kuester H."/>
            <person name="Laamanen P."/>
            <person name="Legros Y."/>
            <person name="Louis E.J."/>
            <person name="Moeller-Rieker S."/>
            <person name="Monnet A."/>
            <person name="Moro M."/>
            <person name="Mueller-Auer S."/>
            <person name="Nussbaumer B."/>
            <person name="Paricio N."/>
            <person name="Paulin L."/>
            <person name="Perea J."/>
            <person name="Perez-Alonso M."/>
            <person name="Perez-Ortin J.E."/>
            <person name="Pohl T.M."/>
            <person name="Prydz H."/>
            <person name="Purnelle B."/>
            <person name="Rasmussen S.W."/>
            <person name="Remacha M.A."/>
            <person name="Revuelta J.L."/>
            <person name="Rieger M."/>
            <person name="Salom D."/>
            <person name="Saluz H.P."/>
            <person name="Saiz J.E."/>
            <person name="Saren A.-M."/>
            <person name="Schaefer M."/>
            <person name="Scharfe M."/>
            <person name="Schmidt E.R."/>
            <person name="Schneider C."/>
            <person name="Scholler P."/>
            <person name="Schwarz S."/>
            <person name="Soler-Mira A."/>
            <person name="Urrestarazu L.A."/>
            <person name="Verhasselt P."/>
            <person name="Vissers S."/>
            <person name="Voet M."/>
            <person name="Volckaert G."/>
            <person name="Wagner G."/>
            <person name="Wambutt R."/>
            <person name="Wedler E."/>
            <person name="Wedler H."/>
            <person name="Woelfl S."/>
            <person name="Harris D.E."/>
            <person name="Bowman S."/>
            <person name="Brown D."/>
            <person name="Churcher C.M."/>
            <person name="Connor R."/>
            <person name="Dedman K."/>
            <person name="Gentles S."/>
            <person name="Hamlin N."/>
            <person name="Hunt S."/>
            <person name="Jones L."/>
            <person name="McDonald S."/>
            <person name="Murphy L.D."/>
            <person name="Niblett D."/>
            <person name="Odell C."/>
            <person name="Oliver K."/>
            <person name="Rajandream M.A."/>
            <person name="Richards C."/>
            <person name="Shore L."/>
            <person name="Walsh S.V."/>
            <person name="Barrell B.G."/>
            <person name="Dietrich F.S."/>
            <person name="Mulligan J.T."/>
            <person name="Allen E."/>
            <person name="Araujo R."/>
            <person name="Aviles E."/>
            <person name="Berno A."/>
            <person name="Carpenter J."/>
            <person name="Chen E."/>
            <person name="Cherry J.M."/>
            <person name="Chung E."/>
            <person name="Duncan M."/>
            <person name="Hunicke-Smith S."/>
            <person name="Hyman R.W."/>
            <person name="Komp C."/>
            <person name="Lashkari D."/>
            <person name="Lew H."/>
            <person name="Lin D."/>
            <person name="Mosedale D."/>
            <person name="Nakahara K."/>
            <person name="Namath A."/>
            <person name="Oefner P."/>
            <person name="Oh C."/>
            <person name="Petel F.X."/>
            <person name="Roberts D."/>
            <person name="Schramm S."/>
            <person name="Schroeder M."/>
            <person name="Shogren T."/>
            <person name="Shroff N."/>
            <person name="Winant A."/>
            <person name="Yelton M.A."/>
            <person name="Botstein D."/>
            <person name="Davis R.W."/>
            <person name="Johnston M."/>
            <person name="Andrews S."/>
            <person name="Brinkman R."/>
            <person name="Cooper J."/>
            <person name="Ding H."/>
            <person name="Du Z."/>
            <person name="Favello A."/>
            <person name="Fulton L."/>
            <person name="Gattung S."/>
            <person name="Greco T."/>
            <person name="Hallsworth K."/>
            <person name="Hawkins J."/>
            <person name="Hillier L.W."/>
            <person name="Jier M."/>
            <person name="Johnson D."/>
            <person name="Johnston L."/>
            <person name="Kirsten J."/>
            <person name="Kucaba T."/>
            <person name="Langston Y."/>
            <person name="Latreille P."/>
            <person name="Le T."/>
            <person name="Mardis E."/>
            <person name="Menezes S."/>
            <person name="Miller N."/>
            <person name="Nhan M."/>
            <person name="Pauley A."/>
            <person name="Peluso D."/>
            <person name="Rifkin L."/>
            <person name="Riles L."/>
            <person name="Taich A."/>
            <person name="Trevaskis E."/>
            <person name="Vignati D."/>
            <person name="Wilcox L."/>
            <person name="Wohldman P."/>
            <person name="Vaudin M."/>
            <person name="Wilson R."/>
            <person name="Waterston R."/>
            <person name="Albermann K."/>
            <person name="Hani J."/>
            <person name="Heumann K."/>
            <person name="Kleine K."/>
            <person name="Mewes H.-W."/>
            <person name="Zollner A."/>
            <person name="Zaccaria P."/>
        </authorList>
    </citation>
    <scope>NUCLEOTIDE SEQUENCE [LARGE SCALE GENOMIC DNA]</scope>
    <source>
        <strain>ATCC 204508 / S288c</strain>
    </source>
</reference>
<reference key="3">
    <citation type="journal article" date="2014" name="G3 (Bethesda)">
        <title>The reference genome sequence of Saccharomyces cerevisiae: Then and now.</title>
        <authorList>
            <person name="Engel S.R."/>
            <person name="Dietrich F.S."/>
            <person name="Fisk D.G."/>
            <person name="Binkley G."/>
            <person name="Balakrishnan R."/>
            <person name="Costanzo M.C."/>
            <person name="Dwight S.S."/>
            <person name="Hitz B.C."/>
            <person name="Karra K."/>
            <person name="Nash R.S."/>
            <person name="Weng S."/>
            <person name="Wong E.D."/>
            <person name="Lloyd P."/>
            <person name="Skrzypek M.S."/>
            <person name="Miyasato S.R."/>
            <person name="Simison M."/>
            <person name="Cherry J.M."/>
        </authorList>
    </citation>
    <scope>GENOME REANNOTATION</scope>
    <source>
        <strain>ATCC 204508 / S288c</strain>
    </source>
</reference>
<reference key="4">
    <citation type="journal article" date="2002" name="Mol. Cell. Biol.">
        <title>Proteomics analysis reveals stable multiprotein complexes in both fission and budding yeasts containing Myb-related Cdc5p/Cef1p, novel pre-mRNA splicing factors, and snRNAs.</title>
        <authorList>
            <person name="Ohi M.D."/>
            <person name="Link A.J."/>
            <person name="Ren L."/>
            <person name="Jennings J.L."/>
            <person name="McDonald W.H."/>
            <person name="Gould K.L."/>
        </authorList>
    </citation>
    <scope>IDENTIFICATION IN THE CWC COMPLEX</scope>
    <scope>IDENTIFICATION BY MASS SPECTROMETRY</scope>
</reference>
<reference key="5">
    <citation type="journal article" date="2003" name="Nature">
        <title>Global analysis of protein expression in yeast.</title>
        <authorList>
            <person name="Ghaemmaghami S."/>
            <person name="Huh W.-K."/>
            <person name="Bower K."/>
            <person name="Howson R.W."/>
            <person name="Belle A."/>
            <person name="Dephoure N."/>
            <person name="O'Shea E.K."/>
            <person name="Weissman J.S."/>
        </authorList>
    </citation>
    <scope>LEVEL OF PROTEIN EXPRESSION [LARGE SCALE ANALYSIS]</scope>
</reference>
<sequence length="530" mass="63029">MNLLETRRSLLEEMEIIENAIAERIQRNPELYYHYIQESSKVFPDTKLPRSSLIAENKIYKFKKVKRKRKQIILQQHEINIFLRDYQEKQQTFNKINRPEETQEDDKDLPNFERKLQQLEKELKNEDENFELDINSKKDKYALFSSSSDPSRRTNILSDRARDLDLNEIFTRDEQYGEYMELEQFHSLWLNVIKRGDCSLLQFLDILELFLDDEKYLLTPPMDRKNDRYMAFLLKLSKYVETFFFKSYALLDAAAVENLIKSDFEHSYCRGSLRSEAKGIYCPFCSRWFKTSSVFESHLVGKIHKKNESKRRNFVYSEYKLHRYLKYLNDEFSRTRSFVERKLAFTANERMAEMDILTQKYEAPAYDSTEKEGAEQVDGEQRDGQLQEEHLSGKSFDMPLGPDGLPMPYWLYKLHGLDREYRCEICSNKVYNGRRTFERHFNEERHIYHLRCLGIEPSSVFKGITKIKEAQELWKNMQGQSQLTSIAAVPPKPNPSQLKVPTELELEEEDEEGNVMSKKVYDELKKQGLV</sequence>
<proteinExistence type="evidence at protein level"/>
<dbReference type="EMBL" id="X53466">
    <property type="protein sequence ID" value="CAA37560.1"/>
    <property type="molecule type" value="Genomic_DNA"/>
</dbReference>
<dbReference type="EMBL" id="Z71781">
    <property type="protein sequence ID" value="CAA96459.1"/>
    <property type="molecule type" value="Genomic_DNA"/>
</dbReference>
<dbReference type="EMBL" id="Z74078">
    <property type="protein sequence ID" value="CAA98589.1"/>
    <property type="molecule type" value="Genomic_DNA"/>
</dbReference>
<dbReference type="EMBL" id="BK006938">
    <property type="protein sequence ID" value="DAA11822.1"/>
    <property type="molecule type" value="Genomic_DNA"/>
</dbReference>
<dbReference type="PIR" id="S12320">
    <property type="entry name" value="S12320"/>
</dbReference>
<dbReference type="RefSeq" id="NP_010254.1">
    <property type="nucleotide sequence ID" value="NM_001180089.1"/>
</dbReference>
<dbReference type="PDB" id="4DGW">
    <property type="method" value="X-ray"/>
    <property type="resolution" value="3.11 A"/>
    <property type="chains" value="A=1-389"/>
</dbReference>
<dbReference type="PDB" id="5NRL">
    <property type="method" value="EM"/>
    <property type="resolution" value="7.20 A"/>
    <property type="chains" value="T=1-530"/>
</dbReference>
<dbReference type="PDB" id="5ZWM">
    <property type="method" value="EM"/>
    <property type="resolution" value="3.40 A"/>
    <property type="chains" value="u=1-530"/>
</dbReference>
<dbReference type="PDB" id="5ZWO">
    <property type="method" value="EM"/>
    <property type="resolution" value="3.90 A"/>
    <property type="chains" value="u=1-530"/>
</dbReference>
<dbReference type="PDB" id="6G90">
    <property type="method" value="EM"/>
    <property type="resolution" value="4.00 A"/>
    <property type="chains" value="T=1-530"/>
</dbReference>
<dbReference type="PDB" id="7OQB">
    <property type="method" value="EM"/>
    <property type="resolution" value="9.00 A"/>
    <property type="chains" value="T=1-530"/>
</dbReference>
<dbReference type="PDB" id="7OQE">
    <property type="method" value="EM"/>
    <property type="resolution" value="5.90 A"/>
    <property type="chains" value="T=1-530"/>
</dbReference>
<dbReference type="PDBsum" id="4DGW"/>
<dbReference type="PDBsum" id="5NRL"/>
<dbReference type="PDBsum" id="5ZWM"/>
<dbReference type="PDBsum" id="5ZWO"/>
<dbReference type="PDBsum" id="6G90"/>
<dbReference type="PDBsum" id="7OQB"/>
<dbReference type="PDBsum" id="7OQE"/>
<dbReference type="EMDB" id="EMD-13028"/>
<dbReference type="EMDB" id="EMD-13033"/>
<dbReference type="EMDB" id="EMD-3683"/>
<dbReference type="EMDB" id="EMD-4364"/>
<dbReference type="EMDB" id="EMD-6972"/>
<dbReference type="EMDB" id="EMD-6974"/>
<dbReference type="SMR" id="P19736"/>
<dbReference type="BioGRID" id="32026">
    <property type="interactions" value="540"/>
</dbReference>
<dbReference type="ComplexPortal" id="CPX-1648">
    <property type="entry name" value="SF3A complex"/>
</dbReference>
<dbReference type="ComplexPortal" id="CPX-1651">
    <property type="entry name" value="PRP19-associated complex"/>
</dbReference>
<dbReference type="ComplexPortal" id="CPX-26">
    <property type="entry name" value="U2 small nuclear ribonucleoprotein complex"/>
</dbReference>
<dbReference type="DIP" id="DIP-651N"/>
<dbReference type="FunCoup" id="P19736">
    <property type="interactions" value="1503"/>
</dbReference>
<dbReference type="IntAct" id="P19736">
    <property type="interactions" value="51"/>
</dbReference>
<dbReference type="MINT" id="P19736"/>
<dbReference type="STRING" id="4932.YDL030W"/>
<dbReference type="iPTMnet" id="P19736"/>
<dbReference type="PaxDb" id="4932-YDL030W"/>
<dbReference type="PeptideAtlas" id="P19736"/>
<dbReference type="EnsemblFungi" id="YDL030W_mRNA">
    <property type="protein sequence ID" value="YDL030W"/>
    <property type="gene ID" value="YDL030W"/>
</dbReference>
<dbReference type="GeneID" id="851531"/>
<dbReference type="KEGG" id="sce:YDL030W"/>
<dbReference type="AGR" id="SGD:S000002188"/>
<dbReference type="SGD" id="S000002188">
    <property type="gene designation" value="PRP9"/>
</dbReference>
<dbReference type="VEuPathDB" id="FungiDB:YDL030W"/>
<dbReference type="eggNOG" id="KOG2636">
    <property type="taxonomic scope" value="Eukaryota"/>
</dbReference>
<dbReference type="GeneTree" id="ENSGT00530000063402"/>
<dbReference type="HOGENOM" id="CLU_027160_1_1_1"/>
<dbReference type="InParanoid" id="P19736"/>
<dbReference type="OMA" id="GPKAFQK"/>
<dbReference type="OrthoDB" id="2160351at2759"/>
<dbReference type="BioCyc" id="YEAST:G3O-29456-MONOMER"/>
<dbReference type="BioGRID-ORCS" id="851531">
    <property type="hits" value="0 hits in 10 CRISPR screens"/>
</dbReference>
<dbReference type="EvolutionaryTrace" id="P19736"/>
<dbReference type="PRO" id="PR:P19736"/>
<dbReference type="Proteomes" id="UP000002311">
    <property type="component" value="Chromosome IV"/>
</dbReference>
<dbReference type="RNAct" id="P19736">
    <property type="molecule type" value="protein"/>
</dbReference>
<dbReference type="GO" id="GO:0005634">
    <property type="term" value="C:nucleus"/>
    <property type="evidence" value="ECO:0000303"/>
    <property type="project" value="ComplexPortal"/>
</dbReference>
<dbReference type="GO" id="GO:0000974">
    <property type="term" value="C:Prp19 complex"/>
    <property type="evidence" value="ECO:0000353"/>
    <property type="project" value="ComplexPortal"/>
</dbReference>
<dbReference type="GO" id="GO:0005681">
    <property type="term" value="C:spliceosomal complex"/>
    <property type="evidence" value="ECO:0000318"/>
    <property type="project" value="GO_Central"/>
</dbReference>
<dbReference type="GO" id="GO:0005686">
    <property type="term" value="C:U2 snRNP"/>
    <property type="evidence" value="ECO:0000303"/>
    <property type="project" value="ComplexPortal"/>
</dbReference>
<dbReference type="GO" id="GO:0071004">
    <property type="term" value="C:U2-type prespliceosome"/>
    <property type="evidence" value="ECO:0000314"/>
    <property type="project" value="SGD"/>
</dbReference>
<dbReference type="GO" id="GO:0003723">
    <property type="term" value="F:RNA binding"/>
    <property type="evidence" value="ECO:0000314"/>
    <property type="project" value="SGD"/>
</dbReference>
<dbReference type="GO" id="GO:0008270">
    <property type="term" value="F:zinc ion binding"/>
    <property type="evidence" value="ECO:0007669"/>
    <property type="project" value="UniProtKB-KW"/>
</dbReference>
<dbReference type="GO" id="GO:0000395">
    <property type="term" value="P:mRNA 5'-splice site recognition"/>
    <property type="evidence" value="ECO:0000315"/>
    <property type="project" value="GO_Central"/>
</dbReference>
<dbReference type="GO" id="GO:0000398">
    <property type="term" value="P:mRNA splicing, via spliceosome"/>
    <property type="evidence" value="ECO:0000314"/>
    <property type="project" value="SGD"/>
</dbReference>
<dbReference type="GO" id="GO:1903241">
    <property type="term" value="P:U2-type prespliceosome assembly"/>
    <property type="evidence" value="ECO:0000303"/>
    <property type="project" value="ComplexPortal"/>
</dbReference>
<dbReference type="Gene3D" id="3.30.160.60">
    <property type="entry name" value="Classic Zinc Finger"/>
    <property type="match status" value="1"/>
</dbReference>
<dbReference type="InterPro" id="IPR000690">
    <property type="entry name" value="Matrin/U1-C_Znf_C2H2"/>
</dbReference>
<dbReference type="InterPro" id="IPR003604">
    <property type="entry name" value="Matrin/U1-like-C_Znf_C2H2"/>
</dbReference>
<dbReference type="InterPro" id="IPR031590">
    <property type="entry name" value="PRP9_N"/>
</dbReference>
<dbReference type="InterPro" id="IPR051421">
    <property type="entry name" value="RNA_Proc_DNA_Dmg_Regulator"/>
</dbReference>
<dbReference type="InterPro" id="IPR031774">
    <property type="entry name" value="SF3A3_dom"/>
</dbReference>
<dbReference type="InterPro" id="IPR024598">
    <property type="entry name" value="SF3a60/Prp9_C"/>
</dbReference>
<dbReference type="InterPro" id="IPR022755">
    <property type="entry name" value="Znf_C2H2_jaz"/>
</dbReference>
<dbReference type="InterPro" id="IPR036236">
    <property type="entry name" value="Znf_C2H2_sf"/>
</dbReference>
<dbReference type="InterPro" id="IPR013087">
    <property type="entry name" value="Znf_C2H2_type"/>
</dbReference>
<dbReference type="PANTHER" id="PTHR12786:SF2">
    <property type="entry name" value="SPLICING FACTOR 3A SUBUNIT 3"/>
    <property type="match status" value="1"/>
</dbReference>
<dbReference type="PANTHER" id="PTHR12786">
    <property type="entry name" value="SPLICING FACTOR SF3A-RELATED"/>
    <property type="match status" value="1"/>
</dbReference>
<dbReference type="Pfam" id="PF16958">
    <property type="entry name" value="PRP9_N"/>
    <property type="match status" value="1"/>
</dbReference>
<dbReference type="Pfam" id="PF16837">
    <property type="entry name" value="SF3A3"/>
    <property type="match status" value="1"/>
</dbReference>
<dbReference type="Pfam" id="PF11931">
    <property type="entry name" value="SF3a60_Prp9_C"/>
    <property type="match status" value="1"/>
</dbReference>
<dbReference type="Pfam" id="PF12171">
    <property type="entry name" value="zf-C2H2_jaz"/>
    <property type="match status" value="1"/>
</dbReference>
<dbReference type="SMART" id="SM00355">
    <property type="entry name" value="ZnF_C2H2"/>
    <property type="match status" value="2"/>
</dbReference>
<dbReference type="SMART" id="SM00451">
    <property type="entry name" value="ZnF_U1"/>
    <property type="match status" value="2"/>
</dbReference>
<dbReference type="SUPFAM" id="SSF57667">
    <property type="entry name" value="beta-beta-alpha zinc fingers"/>
    <property type="match status" value="1"/>
</dbReference>
<dbReference type="PROSITE" id="PS50171">
    <property type="entry name" value="ZF_MATRIN"/>
    <property type="match status" value="2"/>
</dbReference>
<gene>
    <name type="primary">PRP9</name>
    <name type="ordered locus">YDL030W</name>
    <name type="ORF">D2773</name>
</gene>